<organism>
    <name type="scientific">Milnesium tardigradum</name>
    <name type="common">Water bear</name>
    <name type="synonym">Tardigrade</name>
    <dbReference type="NCBI Taxonomy" id="46460"/>
    <lineage>
        <taxon>Eukaryota</taxon>
        <taxon>Metazoa</taxon>
        <taxon>Ecdysozoa</taxon>
        <taxon>Tardigrada</taxon>
        <taxon>Eutardigrada</taxon>
        <taxon>Apochela</taxon>
        <taxon>Milnesiidae</taxon>
        <taxon>Milnesium</taxon>
    </lineage>
</organism>
<feature type="chain" id="PRO_0000440202" description="Aquaporin-1">
    <location>
        <begin position="1"/>
        <end position="333"/>
    </location>
</feature>
<feature type="transmembrane region" description="Helical" evidence="1">
    <location>
        <begin position="85"/>
        <end position="105"/>
    </location>
</feature>
<feature type="transmembrane region" description="Helical" evidence="1">
    <location>
        <begin position="116"/>
        <end position="136"/>
    </location>
</feature>
<feature type="transmembrane region" description="Helical" evidence="1">
    <location>
        <begin position="156"/>
        <end position="176"/>
    </location>
</feature>
<feature type="transmembrane region" description="Helical" evidence="1">
    <location>
        <begin position="213"/>
        <end position="233"/>
    </location>
</feature>
<feature type="transmembrane region" description="Helical" evidence="1">
    <location>
        <begin position="245"/>
        <end position="265"/>
    </location>
</feature>
<feature type="transmembrane region" description="Helical" evidence="1">
    <location>
        <begin position="303"/>
        <end position="323"/>
    </location>
</feature>
<feature type="region of interest" description="Disordered" evidence="2">
    <location>
        <begin position="1"/>
        <end position="26"/>
    </location>
</feature>
<feature type="short sequence motif" description="NPA 1">
    <location>
        <begin position="137"/>
        <end position="139"/>
    </location>
</feature>
<feature type="short sequence motif" description="NPA 2">
    <location>
        <begin position="270"/>
        <end position="272"/>
    </location>
</feature>
<comment type="function">
    <text evidence="6">Aquaglyceroporin that may modulate the water content and osmolytes during anhydrobiosis (PubMed:23761966).</text>
</comment>
<comment type="subcellular location">
    <subcellularLocation>
        <location evidence="5">Cell membrane</location>
        <topology evidence="1">Multi-pass membrane protein</topology>
    </subcellularLocation>
</comment>
<comment type="induction">
    <text evidence="3">Transcript abundance is medium and expression is slightly down-regulated in the inactive stage (during anhydrobiois) (PubMed:23761966).</text>
</comment>
<comment type="domain">
    <text evidence="6">Aquaporins contain two tandem repeats each containing three membrane-spanning domains and a pore-forming loop with the signature motif Asn-Pro-Ala (NPA).</text>
</comment>
<comment type="similarity">
    <text evidence="5">Belongs to the MIP/aquaporin (TC 1.A.8) family.</text>
</comment>
<accession>G5CTF8</accession>
<evidence type="ECO:0000255" key="1"/>
<evidence type="ECO:0000256" key="2">
    <source>
        <dbReference type="SAM" id="MobiDB-lite"/>
    </source>
</evidence>
<evidence type="ECO:0000269" key="3">
    <source>
    </source>
</evidence>
<evidence type="ECO:0000303" key="4">
    <source>
    </source>
</evidence>
<evidence type="ECO:0000305" key="5"/>
<evidence type="ECO:0000305" key="6">
    <source>
    </source>
</evidence>
<name>AQP1_MILTA</name>
<reference key="1">
    <citation type="journal article" date="2013" name="Bioinf. Biol. Insights">
        <title>The aquaporin channel repertoire of the tardigrade Milnesium tardigradum.</title>
        <authorList>
            <person name="Grohme M.A."/>
            <person name="Mali B."/>
            <person name="Welnicz W."/>
            <person name="Michel S."/>
            <person name="Schill R.O."/>
            <person name="Frohme M."/>
        </authorList>
    </citation>
    <scope>NUCLEOTIDE SEQUENCE [MRNA]</scope>
    <scope>DOMAIN</scope>
    <scope>INDUCTION</scope>
</reference>
<gene>
    <name evidence="4" type="primary">AQP1</name>
</gene>
<keyword id="KW-1003">Cell membrane</keyword>
<keyword id="KW-0472">Membrane</keyword>
<keyword id="KW-0677">Repeat</keyword>
<keyword id="KW-0346">Stress response</keyword>
<keyword id="KW-0812">Transmembrane</keyword>
<keyword id="KW-1133">Transmembrane helix</keyword>
<keyword id="KW-0813">Transport</keyword>
<proteinExistence type="evidence at transcript level"/>
<protein>
    <recommendedName>
        <fullName evidence="4">Aquaporin-1</fullName>
        <shortName evidence="4">AQP-1</shortName>
    </recommendedName>
</protein>
<sequence>MQKMSEKPLYRAAENPTRNADRRAGRFEEEELISKTGRHPDMVIQFQDDADDQHTSHYEGNWRHYFHKKLHIKNRLIRDWLSESLAMFLFMSLLLGGAATAHFTGKQDDPMLTAVFHGFSAVFGIYVGAGVSGGIINPALTFAVALLGRVSWRKCLVLVSAQYFGSFIASAVVYLIYYESLQNYAKTADDNGEFLQKTAGIWSTFPKPYLSMTGAIFNQIFCTMLLSIGFLSISDHKNFRPTKGLFPFAVGLLIMTVFLAFSYSAGAAMNPARDLSPRLWSLIIGYGNEVFSHNDYKWFWIPWLFPYVGALFGAVMYQIFVGVHWPDKQSTKR</sequence>
<dbReference type="EMBL" id="JN378736">
    <property type="protein sequence ID" value="AEP14555.1"/>
    <property type="molecule type" value="mRNA"/>
</dbReference>
<dbReference type="SMR" id="G5CTF8"/>
<dbReference type="GO" id="GO:0005886">
    <property type="term" value="C:plasma membrane"/>
    <property type="evidence" value="ECO:0007669"/>
    <property type="project" value="UniProtKB-SubCell"/>
</dbReference>
<dbReference type="GO" id="GO:0015254">
    <property type="term" value="F:glycerol channel activity"/>
    <property type="evidence" value="ECO:0007669"/>
    <property type="project" value="TreeGrafter"/>
</dbReference>
<dbReference type="GO" id="GO:0015250">
    <property type="term" value="F:water channel activity"/>
    <property type="evidence" value="ECO:0000250"/>
    <property type="project" value="UniProtKB"/>
</dbReference>
<dbReference type="Gene3D" id="1.20.1080.10">
    <property type="entry name" value="Glycerol uptake facilitator protein"/>
    <property type="match status" value="1"/>
</dbReference>
<dbReference type="InterPro" id="IPR023271">
    <property type="entry name" value="Aquaporin-like"/>
</dbReference>
<dbReference type="InterPro" id="IPR000425">
    <property type="entry name" value="MIP"/>
</dbReference>
<dbReference type="InterPro" id="IPR050363">
    <property type="entry name" value="MIP/Aquaporin"/>
</dbReference>
<dbReference type="PANTHER" id="PTHR43829">
    <property type="entry name" value="AQUAPORIN OR AQUAGLYCEROPORIN RELATED"/>
    <property type="match status" value="1"/>
</dbReference>
<dbReference type="PANTHER" id="PTHR43829:SF9">
    <property type="entry name" value="AQUAPORIN-9"/>
    <property type="match status" value="1"/>
</dbReference>
<dbReference type="Pfam" id="PF00230">
    <property type="entry name" value="MIP"/>
    <property type="match status" value="1"/>
</dbReference>
<dbReference type="PRINTS" id="PR00783">
    <property type="entry name" value="MINTRINSICP"/>
</dbReference>
<dbReference type="SUPFAM" id="SSF81338">
    <property type="entry name" value="Aquaporin-like"/>
    <property type="match status" value="1"/>
</dbReference>